<name>SC6A1_HUMAN</name>
<reference key="1">
    <citation type="journal article" date="1990" name="FEBS Lett.">
        <title>Cloning of the human brain GABA transporter.</title>
        <authorList>
            <person name="Nelson H."/>
            <person name="Mandiyan S."/>
            <person name="Nelson N."/>
        </authorList>
    </citation>
    <scope>NUCLEOTIDE SEQUENCE [MRNA]</scope>
</reference>
<reference key="2">
    <citation type="journal article" date="2006" name="Nature">
        <title>The DNA sequence, annotation and analysis of human chromosome 3.</title>
        <authorList>
            <person name="Muzny D.M."/>
            <person name="Scherer S.E."/>
            <person name="Kaul R."/>
            <person name="Wang J."/>
            <person name="Yu J."/>
            <person name="Sudbrak R."/>
            <person name="Buhay C.J."/>
            <person name="Chen R."/>
            <person name="Cree A."/>
            <person name="Ding Y."/>
            <person name="Dugan-Rocha S."/>
            <person name="Gill R."/>
            <person name="Gunaratne P."/>
            <person name="Harris R.A."/>
            <person name="Hawes A.C."/>
            <person name="Hernandez J."/>
            <person name="Hodgson A.V."/>
            <person name="Hume J."/>
            <person name="Jackson A."/>
            <person name="Khan Z.M."/>
            <person name="Kovar-Smith C."/>
            <person name="Lewis L.R."/>
            <person name="Lozado R.J."/>
            <person name="Metzker M.L."/>
            <person name="Milosavljevic A."/>
            <person name="Miner G.R."/>
            <person name="Morgan M.B."/>
            <person name="Nazareth L.V."/>
            <person name="Scott G."/>
            <person name="Sodergren E."/>
            <person name="Song X.-Z."/>
            <person name="Steffen D."/>
            <person name="Wei S."/>
            <person name="Wheeler D.A."/>
            <person name="Wright M.W."/>
            <person name="Worley K.C."/>
            <person name="Yuan Y."/>
            <person name="Zhang Z."/>
            <person name="Adams C.Q."/>
            <person name="Ansari-Lari M.A."/>
            <person name="Ayele M."/>
            <person name="Brown M.J."/>
            <person name="Chen G."/>
            <person name="Chen Z."/>
            <person name="Clendenning J."/>
            <person name="Clerc-Blankenburg K.P."/>
            <person name="Chen R."/>
            <person name="Chen Z."/>
            <person name="Davis C."/>
            <person name="Delgado O."/>
            <person name="Dinh H.H."/>
            <person name="Dong W."/>
            <person name="Draper H."/>
            <person name="Ernst S."/>
            <person name="Fu G."/>
            <person name="Gonzalez-Garay M.L."/>
            <person name="Garcia D.K."/>
            <person name="Gillett W."/>
            <person name="Gu J."/>
            <person name="Hao B."/>
            <person name="Haugen E."/>
            <person name="Havlak P."/>
            <person name="He X."/>
            <person name="Hennig S."/>
            <person name="Hu S."/>
            <person name="Huang W."/>
            <person name="Jackson L.R."/>
            <person name="Jacob L.S."/>
            <person name="Kelly S.H."/>
            <person name="Kube M."/>
            <person name="Levy R."/>
            <person name="Li Z."/>
            <person name="Liu B."/>
            <person name="Liu J."/>
            <person name="Liu W."/>
            <person name="Lu J."/>
            <person name="Maheshwari M."/>
            <person name="Nguyen B.-V."/>
            <person name="Okwuonu G.O."/>
            <person name="Palmeiri A."/>
            <person name="Pasternak S."/>
            <person name="Perez L.M."/>
            <person name="Phelps K.A."/>
            <person name="Plopper F.J."/>
            <person name="Qiang B."/>
            <person name="Raymond C."/>
            <person name="Rodriguez R."/>
            <person name="Saenphimmachak C."/>
            <person name="Santibanez J."/>
            <person name="Shen H."/>
            <person name="Shen Y."/>
            <person name="Subramanian S."/>
            <person name="Tabor P.E."/>
            <person name="Verduzco D."/>
            <person name="Waldron L."/>
            <person name="Wang J."/>
            <person name="Wang J."/>
            <person name="Wang Q."/>
            <person name="Williams G.A."/>
            <person name="Wong G.K.-S."/>
            <person name="Yao Z."/>
            <person name="Zhang J."/>
            <person name="Zhang X."/>
            <person name="Zhao G."/>
            <person name="Zhou J."/>
            <person name="Zhou Y."/>
            <person name="Nelson D."/>
            <person name="Lehrach H."/>
            <person name="Reinhardt R."/>
            <person name="Naylor S.L."/>
            <person name="Yang H."/>
            <person name="Olson M."/>
            <person name="Weinstock G."/>
            <person name="Gibbs R.A."/>
        </authorList>
    </citation>
    <scope>NUCLEOTIDE SEQUENCE [LARGE SCALE GENOMIC DNA]</scope>
</reference>
<reference key="3">
    <citation type="journal article" date="2004" name="Genome Res.">
        <title>The status, quality, and expansion of the NIH full-length cDNA project: the Mammalian Gene Collection (MGC).</title>
        <authorList>
            <consortium name="The MGC Project Team"/>
        </authorList>
    </citation>
    <scope>NUCLEOTIDE SEQUENCE [LARGE SCALE MRNA]</scope>
    <scope>VARIANT GLN-521</scope>
    <source>
        <tissue>Brain</tissue>
    </source>
</reference>
<reference key="4">
    <citation type="journal article" date="2015" name="Am. J. Hum. Genet.">
        <title>Mutations in the GABA Transporter SLC6A1 Cause Epilepsy with Myoclonic-Atonic Seizures.</title>
        <authorList>
            <consortium name="EuroEPINOMICS Rare Epilepsy Syndrome Myoclonic-Astatic Epilepsy &amp; Dravet working group"/>
            <person name="Carvill G.L."/>
            <person name="McMahon J.M."/>
            <person name="Schneider A."/>
            <person name="Zemel M."/>
            <person name="Myers C.T."/>
            <person name="Saykally J."/>
            <person name="Nguyen J."/>
            <person name="Robbiano A."/>
            <person name="Zara F."/>
            <person name="Specchio N."/>
            <person name="Mecarelli O."/>
            <person name="Smith R.L."/>
            <person name="Leventer R.J."/>
            <person name="Moeller R.S."/>
            <person name="Nikanorova M."/>
            <person name="Dimova P."/>
            <person name="Jordanova A."/>
            <person name="Petrou S."/>
            <person name="Helbig I."/>
            <person name="Striano P."/>
            <person name="Weckhuysen S."/>
            <person name="Berkovic S.F."/>
            <person name="Scheffer I.E."/>
            <person name="Mefford H.C."/>
        </authorList>
    </citation>
    <scope>INVOLVEMENT IN MAE</scope>
    <scope>VARIANTS MAE GLN-44; VAL-288; ARG-297 AND PRO-334</scope>
</reference>
<reference key="5">
    <citation type="journal article" date="2018" name="Epilepsia">
        <title>SLC6A1 variants identified in epilepsy patients reduce gamma-aminobutyric acid transport.</title>
        <authorList>
            <person name="Mattison K.A."/>
            <person name="Butler K.M."/>
            <person name="Inglis G.A.S."/>
            <person name="Dayan O."/>
            <person name="Boussidan H."/>
            <person name="Bhambhani V."/>
            <person name="Philbrook B."/>
            <person name="da Silva C."/>
            <person name="Alexander J.J."/>
            <person name="Kanner B.I."/>
            <person name="Escayg A."/>
        </authorList>
    </citation>
    <scope>VARIANTS GLU-94; ARG-235; CYS-445; 496-TRP--ILE-599 DEL AND ARG-550</scope>
    <scope>VARIANTS MAE SER-270 AND ILE-272 DEL</scope>
    <scope>CHARACTERIZATION OF VARIANTS GLU-94; ARG-235; CYS-445; 496-TRP--ILE-599 DEL AND ARG-550</scope>
    <scope>CHARACTERIZATION OF VARIANTS MAE SER-270 AND ILE-272 DEL</scope>
    <scope>FUNCTION</scope>
    <scope>TRANSPORTER ACTIVITY</scope>
</reference>
<proteinExistence type="evidence at protein level"/>
<feature type="chain" id="PRO_0000214743" description="Sodium- and chloride-dependent GABA transporter 1">
    <location>
        <begin position="1"/>
        <end position="599"/>
    </location>
</feature>
<feature type="topological domain" description="Cytoplasmic" evidence="1">
    <location>
        <begin position="1"/>
        <end position="52"/>
    </location>
</feature>
<feature type="transmembrane region" description="Helical; Name=1" evidence="4">
    <location>
        <begin position="53"/>
        <end position="73"/>
    </location>
</feature>
<feature type="topological domain" description="Extracellular" evidence="1">
    <location>
        <begin position="74"/>
        <end position="80"/>
    </location>
</feature>
<feature type="transmembrane region" description="Helical; Name=2" evidence="4">
    <location>
        <begin position="81"/>
        <end position="100"/>
    </location>
</feature>
<feature type="topological domain" description="Cytoplasmic" evidence="1">
    <location>
        <begin position="101"/>
        <end position="123"/>
    </location>
</feature>
<feature type="transmembrane region" description="Helical; Name=3" evidence="4">
    <location>
        <begin position="124"/>
        <end position="144"/>
    </location>
</feature>
<feature type="topological domain" description="Extracellular" evidence="1">
    <location>
        <begin position="145"/>
        <end position="211"/>
    </location>
</feature>
<feature type="transmembrane region" description="Helical; Name=4" evidence="4">
    <location>
        <begin position="212"/>
        <end position="230"/>
    </location>
</feature>
<feature type="topological domain" description="Cytoplasmic" evidence="1">
    <location>
        <begin position="231"/>
        <end position="238"/>
    </location>
</feature>
<feature type="transmembrane region" description="Helical; Name=5" evidence="4">
    <location>
        <begin position="239"/>
        <end position="256"/>
    </location>
</feature>
<feature type="topological domain" description="Extracellular" evidence="1">
    <location>
        <begin position="257"/>
        <end position="291"/>
    </location>
</feature>
<feature type="transmembrane region" description="Helical; Name=6" evidence="4">
    <location>
        <begin position="292"/>
        <end position="309"/>
    </location>
</feature>
<feature type="topological domain" description="Cytoplasmic" evidence="1">
    <location>
        <begin position="310"/>
        <end position="320"/>
    </location>
</feature>
<feature type="transmembrane region" description="Helical; Name=7" evidence="4">
    <location>
        <begin position="321"/>
        <end position="342"/>
    </location>
</feature>
<feature type="topological domain" description="Extracellular" evidence="1">
    <location>
        <begin position="343"/>
        <end position="374"/>
    </location>
</feature>
<feature type="transmembrane region" description="Helical; Name=8" evidence="4">
    <location>
        <begin position="375"/>
        <end position="394"/>
    </location>
</feature>
<feature type="topological domain" description="Cytoplasmic" evidence="1">
    <location>
        <begin position="395"/>
        <end position="421"/>
    </location>
</feature>
<feature type="transmembrane region" description="Helical; Name=9" evidence="4">
    <location>
        <begin position="422"/>
        <end position="440"/>
    </location>
</feature>
<feature type="topological domain" description="Extracellular" evidence="1">
    <location>
        <begin position="441"/>
        <end position="456"/>
    </location>
</feature>
<feature type="transmembrane region" description="Helical; Name=10" evidence="4">
    <location>
        <begin position="457"/>
        <end position="477"/>
    </location>
</feature>
<feature type="topological domain" description="Cytoplasmic" evidence="1">
    <location>
        <begin position="478"/>
        <end position="497"/>
    </location>
</feature>
<feature type="transmembrane region" description="Helical; Name=11" evidence="4">
    <location>
        <begin position="498"/>
        <end position="517"/>
    </location>
</feature>
<feature type="topological domain" description="Extracellular" evidence="1">
    <location>
        <begin position="518"/>
        <end position="535"/>
    </location>
</feature>
<feature type="transmembrane region" description="Helical; Name=12" evidence="4">
    <location>
        <begin position="536"/>
        <end position="554"/>
    </location>
</feature>
<feature type="topological domain" description="Cytoplasmic" evidence="1">
    <location>
        <begin position="555"/>
        <end position="599"/>
    </location>
</feature>
<feature type="region of interest" description="Disordered" evidence="5">
    <location>
        <begin position="577"/>
        <end position="599"/>
    </location>
</feature>
<feature type="short sequence motif" description="PDZ-binding">
    <location>
        <begin position="597"/>
        <end position="599"/>
    </location>
</feature>
<feature type="compositionally biased region" description="Polar residues" evidence="5">
    <location>
        <begin position="588"/>
        <end position="599"/>
    </location>
</feature>
<feature type="binding site" evidence="3">
    <location>
        <position position="59"/>
    </location>
    <ligand>
        <name>Na(+)</name>
        <dbReference type="ChEBI" id="CHEBI:29101"/>
        <label>1</label>
    </ligand>
</feature>
<feature type="binding site" evidence="3">
    <location>
        <position position="61"/>
    </location>
    <ligand>
        <name>Na(+)</name>
        <dbReference type="ChEBI" id="CHEBI:29101"/>
        <label>2</label>
    </ligand>
</feature>
<feature type="binding site" evidence="3">
    <location>
        <position position="62"/>
    </location>
    <ligand>
        <name>Na(+)</name>
        <dbReference type="ChEBI" id="CHEBI:29101"/>
        <label>1</label>
    </ligand>
</feature>
<feature type="binding site" evidence="3">
    <location>
        <position position="66"/>
    </location>
    <ligand>
        <name>Na(+)</name>
        <dbReference type="ChEBI" id="CHEBI:29101"/>
        <label>2</label>
    </ligand>
</feature>
<feature type="binding site" evidence="3">
    <location>
        <position position="295"/>
    </location>
    <ligand>
        <name>Na(+)</name>
        <dbReference type="ChEBI" id="CHEBI:29101"/>
        <label>2</label>
    </ligand>
</feature>
<feature type="binding site" evidence="3">
    <location>
        <position position="327"/>
    </location>
    <ligand>
        <name>Na(+)</name>
        <dbReference type="ChEBI" id="CHEBI:29101"/>
        <label>2</label>
    </ligand>
</feature>
<feature type="binding site" evidence="3">
    <location>
        <position position="392"/>
    </location>
    <ligand>
        <name>Na(+)</name>
        <dbReference type="ChEBI" id="CHEBI:29101"/>
        <label>1</label>
    </ligand>
</feature>
<feature type="binding site" evidence="3">
    <location>
        <position position="395"/>
    </location>
    <ligand>
        <name>Na(+)</name>
        <dbReference type="ChEBI" id="CHEBI:29101"/>
        <label>1</label>
    </ligand>
</feature>
<feature type="binding site" evidence="3">
    <location>
        <position position="396"/>
    </location>
    <ligand>
        <name>Na(+)</name>
        <dbReference type="ChEBI" id="CHEBI:29101"/>
        <label>1</label>
    </ligand>
</feature>
<feature type="modified residue" description="Phosphoserine" evidence="2">
    <location>
        <position position="18"/>
    </location>
</feature>
<feature type="modified residue" description="Phosphoserine" evidence="2">
    <location>
        <position position="591"/>
    </location>
</feature>
<feature type="glycosylation site" description="N-linked (GlcNAc...) asparagine" evidence="4">
    <location>
        <position position="176"/>
    </location>
</feature>
<feature type="glycosylation site" description="N-linked (GlcNAc...) asparagine" evidence="4">
    <location>
        <position position="181"/>
    </location>
</feature>
<feature type="glycosylation site" description="N-linked (GlcNAc...) asparagine" evidence="4">
    <location>
        <position position="184"/>
    </location>
</feature>
<feature type="disulfide bond" evidence="3">
    <location>
        <begin position="164"/>
        <end position="173"/>
    </location>
</feature>
<feature type="sequence variant" id="VAR_073852" description="In MAE; dbSNP:rs794726859." evidence="7">
    <original>R</original>
    <variation>Q</variation>
    <location>
        <position position="44"/>
    </location>
</feature>
<feature type="sequence variant" id="VAR_086249" description="Complete loss of GABA transporter activity." evidence="8">
    <original>G</original>
    <variation>E</variation>
    <location>
        <position position="94"/>
    </location>
</feature>
<feature type="sequence variant" id="VAR_086250" description="Found in a patient with intractable absence epilepsy; uncertain significance; retains about 27% of wild-type GABA transporter activity." evidence="8">
    <original>W</original>
    <variation>R</variation>
    <location>
        <position position="235"/>
    </location>
</feature>
<feature type="sequence variant" id="VAR_086251" description="In MAE; uncertain significance; retains about 2% of wild-type GABA transporter activity." evidence="8">
    <original>F</original>
    <variation>S</variation>
    <location>
        <position position="270"/>
    </location>
</feature>
<feature type="sequence variant" id="VAR_086252" description="In MAE; uncertain significance; retains about 13% of wild-type GABA transporter activity." evidence="8">
    <location>
        <position position="272"/>
    </location>
</feature>
<feature type="sequence variant" id="VAR_073853" description="In MAE; dbSNP:rs794726860." evidence="7">
    <original>A</original>
    <variation>V</variation>
    <location>
        <position position="288"/>
    </location>
</feature>
<feature type="sequence variant" id="VAR_073854" description="In MAE; dbSNP:rs876657400." evidence="7">
    <original>G</original>
    <variation>R</variation>
    <location>
        <position position="297"/>
    </location>
</feature>
<feature type="sequence variant" id="VAR_073855" description="In MAE; dbSNP:rs749240316." evidence="7">
    <original>A</original>
    <variation>P</variation>
    <location>
        <position position="334"/>
    </location>
</feature>
<feature type="sequence variant" id="VAR_086253" description="Found in a patient with generalized epilepsy; uncertain significance; retains about 6% of wild-type GABA transporter activity." evidence="8">
    <original>Y</original>
    <variation>C</variation>
    <location>
        <position position="445"/>
    </location>
</feature>
<feature type="sequence variant" id="VAR_086254" description="Found in a patient with generalized epilepsy; uncertain significance; complete loss of GABA transporter activity." evidence="8">
    <location>
        <begin position="496"/>
        <end position="599"/>
    </location>
</feature>
<feature type="sequence variant" id="VAR_055088" description="In dbSNP:rs17855574." evidence="6">
    <original>P</original>
    <variation>Q</variation>
    <location>
        <position position="521"/>
    </location>
</feature>
<feature type="sequence variant" id="VAR_086255" description="Found in a patient with generalized epilepsy; uncertain significance; complete loss of GABA transporter activity." evidence="8">
    <original>G</original>
    <variation>R</variation>
    <location>
        <position position="550"/>
    </location>
</feature>
<feature type="sequence conflict" description="In Ref. 1; CAA38484." evidence="9" ref="1">
    <original>T</original>
    <variation>A</variation>
    <location>
        <position position="558"/>
    </location>
</feature>
<feature type="sequence conflict" description="In Ref. 1; CAA38484." evidence="9" ref="1">
    <original>I</original>
    <variation>T</variation>
    <location>
        <position position="577"/>
    </location>
</feature>
<feature type="sequence conflict" description="In Ref. 1; CAA38484." evidence="9" ref="1">
    <original>QP</original>
    <variation>HA</variation>
    <location>
        <begin position="586"/>
        <end position="587"/>
    </location>
</feature>
<feature type="helix" evidence="11">
    <location>
        <begin position="47"/>
        <end position="56"/>
    </location>
</feature>
<feature type="turn" evidence="11">
    <location>
        <begin position="58"/>
        <end position="60"/>
    </location>
</feature>
<feature type="helix" evidence="11">
    <location>
        <begin position="64"/>
        <end position="67"/>
    </location>
</feature>
<feature type="helix" evidence="11">
    <location>
        <begin position="69"/>
        <end position="76"/>
    </location>
</feature>
<feature type="helix" evidence="11">
    <location>
        <begin position="80"/>
        <end position="82"/>
    </location>
</feature>
<feature type="helix" evidence="11">
    <location>
        <begin position="83"/>
        <end position="92"/>
    </location>
</feature>
<feature type="helix" evidence="11">
    <location>
        <begin position="94"/>
        <end position="108"/>
    </location>
</feature>
<feature type="helix" evidence="11">
    <location>
        <begin position="114"/>
        <end position="117"/>
    </location>
</feature>
<feature type="helix" evidence="11">
    <location>
        <begin position="120"/>
        <end position="122"/>
    </location>
</feature>
<feature type="helix" evidence="11">
    <location>
        <begin position="123"/>
        <end position="153"/>
    </location>
</feature>
<feature type="strand" evidence="11">
    <location>
        <begin position="155"/>
        <end position="158"/>
    </location>
</feature>
<feature type="helix" evidence="12">
    <location>
        <begin position="160"/>
        <end position="162"/>
    </location>
</feature>
<feature type="helix" evidence="11">
    <location>
        <begin position="188"/>
        <end position="195"/>
    </location>
</feature>
<feature type="turn" evidence="11">
    <location>
        <begin position="196"/>
        <end position="198"/>
    </location>
</feature>
<feature type="helix" evidence="11">
    <location>
        <begin position="212"/>
        <end position="229"/>
    </location>
</feature>
<feature type="helix" evidence="11">
    <location>
        <begin position="234"/>
        <end position="237"/>
    </location>
</feature>
<feature type="helix" evidence="11">
    <location>
        <begin position="240"/>
        <end position="258"/>
    </location>
</feature>
<feature type="helix" evidence="11">
    <location>
        <begin position="264"/>
        <end position="272"/>
    </location>
</feature>
<feature type="helix" evidence="11">
    <location>
        <begin position="276"/>
        <end position="280"/>
    </location>
</feature>
<feature type="helix" evidence="11">
    <location>
        <begin position="282"/>
        <end position="296"/>
    </location>
</feature>
<feature type="turn" evidence="11">
    <location>
        <begin position="297"/>
        <end position="301"/>
    </location>
</feature>
<feature type="helix" evidence="11">
    <location>
        <begin position="302"/>
        <end position="309"/>
    </location>
</feature>
<feature type="helix" evidence="11">
    <location>
        <begin position="316"/>
        <end position="349"/>
    </location>
</feature>
<feature type="helix" evidence="11">
    <location>
        <begin position="353"/>
        <end position="357"/>
    </location>
</feature>
<feature type="helix" evidence="11">
    <location>
        <begin position="364"/>
        <end position="373"/>
    </location>
</feature>
<feature type="strand" evidence="12">
    <location>
        <begin position="375"/>
        <end position="377"/>
    </location>
</feature>
<feature type="helix" evidence="11">
    <location>
        <begin position="378"/>
        <end position="411"/>
    </location>
</feature>
<feature type="helix" evidence="11">
    <location>
        <begin position="413"/>
        <end position="416"/>
    </location>
</feature>
<feature type="helix" evidence="11">
    <location>
        <begin position="417"/>
        <end position="419"/>
    </location>
</feature>
<feature type="helix" evidence="11">
    <location>
        <begin position="420"/>
        <end position="435"/>
    </location>
</feature>
<feature type="helix" evidence="11">
    <location>
        <begin position="436"/>
        <end position="438"/>
    </location>
</feature>
<feature type="helix" evidence="11">
    <location>
        <begin position="443"/>
        <end position="453"/>
    </location>
</feature>
<feature type="turn" evidence="13">
    <location>
        <begin position="454"/>
        <end position="456"/>
    </location>
</feature>
<feature type="helix" evidence="11">
    <location>
        <begin position="457"/>
        <end position="472"/>
    </location>
</feature>
<feature type="turn" evidence="11">
    <location>
        <begin position="473"/>
        <end position="476"/>
    </location>
</feature>
<feature type="helix" evidence="11">
    <location>
        <begin position="477"/>
        <end position="488"/>
    </location>
</feature>
<feature type="helix" evidence="11">
    <location>
        <begin position="494"/>
        <end position="501"/>
    </location>
</feature>
<feature type="helix" evidence="11">
    <location>
        <begin position="503"/>
        <end position="518"/>
    </location>
</feature>
<feature type="helix" evidence="11">
    <location>
        <begin position="531"/>
        <end position="545"/>
    </location>
</feature>
<feature type="helix" evidence="11">
    <location>
        <begin position="547"/>
        <end position="558"/>
    </location>
</feature>
<feature type="helix" evidence="11">
    <location>
        <begin position="563"/>
        <end position="571"/>
    </location>
</feature>
<accession>P30531</accession>
<accession>Q8N4K8</accession>
<organism>
    <name type="scientific">Homo sapiens</name>
    <name type="common">Human</name>
    <dbReference type="NCBI Taxonomy" id="9606"/>
    <lineage>
        <taxon>Eukaryota</taxon>
        <taxon>Metazoa</taxon>
        <taxon>Chordata</taxon>
        <taxon>Craniata</taxon>
        <taxon>Vertebrata</taxon>
        <taxon>Euteleostomi</taxon>
        <taxon>Mammalia</taxon>
        <taxon>Eutheria</taxon>
        <taxon>Euarchontoglires</taxon>
        <taxon>Primates</taxon>
        <taxon>Haplorrhini</taxon>
        <taxon>Catarrhini</taxon>
        <taxon>Hominidae</taxon>
        <taxon>Homo</taxon>
    </lineage>
</organism>
<keyword id="KW-0002">3D-structure</keyword>
<keyword id="KW-1003">Cell membrane</keyword>
<keyword id="KW-0966">Cell projection</keyword>
<keyword id="KW-0225">Disease variant</keyword>
<keyword id="KW-1015">Disulfide bond</keyword>
<keyword id="KW-0887">Epilepsy</keyword>
<keyword id="KW-0325">Glycoprotein</keyword>
<keyword id="KW-0472">Membrane</keyword>
<keyword id="KW-0479">Metal-binding</keyword>
<keyword id="KW-0532">Neurotransmitter transport</keyword>
<keyword id="KW-0597">Phosphoprotein</keyword>
<keyword id="KW-1267">Proteomics identification</keyword>
<keyword id="KW-1185">Reference proteome</keyword>
<keyword id="KW-0915">Sodium</keyword>
<keyword id="KW-0769">Symport</keyword>
<keyword id="KW-0770">Synapse</keyword>
<keyword id="KW-0812">Transmembrane</keyword>
<keyword id="KW-1133">Transmembrane helix</keyword>
<keyword id="KW-0813">Transport</keyword>
<evidence type="ECO:0000250" key="1">
    <source>
        <dbReference type="UniProtKB" id="P23978"/>
    </source>
</evidence>
<evidence type="ECO:0000250" key="2">
    <source>
        <dbReference type="UniProtKB" id="P31648"/>
    </source>
</evidence>
<evidence type="ECO:0000250" key="3">
    <source>
        <dbReference type="UniProtKB" id="Q7K4Y6"/>
    </source>
</evidence>
<evidence type="ECO:0000255" key="4"/>
<evidence type="ECO:0000256" key="5">
    <source>
        <dbReference type="SAM" id="MobiDB-lite"/>
    </source>
</evidence>
<evidence type="ECO:0000269" key="6">
    <source>
    </source>
</evidence>
<evidence type="ECO:0000269" key="7">
    <source>
    </source>
</evidence>
<evidence type="ECO:0000269" key="8">
    <source>
    </source>
</evidence>
<evidence type="ECO:0000305" key="9"/>
<evidence type="ECO:0000305" key="10">
    <source>
    </source>
</evidence>
<evidence type="ECO:0007829" key="11">
    <source>
        <dbReference type="PDB" id="7Y7V"/>
    </source>
</evidence>
<evidence type="ECO:0007829" key="12">
    <source>
        <dbReference type="PDB" id="7Y7W"/>
    </source>
</evidence>
<evidence type="ECO:0007829" key="13">
    <source>
        <dbReference type="PDB" id="7Y7Z"/>
    </source>
</evidence>
<sequence>MATNGSKVADGQISTEVSEAPVANDKPKTLVVKVQKKAADLPDRDTWKGRFDFLMSCVGYAIGLGNVWRFPYLCGKNGGGAFLIPYFLTLIFAGVPLFLLECSLGQYTSIGGLGVWKLAPMFKGVGLAAAVLSFWLNIYYIVIISWAIYYLYNSFTTTLPWKQCDNPWNTDRCFSNYSMVNTTNMTSAVVEFWERNMHQMTDGLDKPGQIRWPLAITLAIAWILVYFCIWKGVGWTGKVVYFSATYPYIMLIILFFRGVTLPGAKEGILFYITPNFRKLSDSEVWLDAATQIFFSYGLGLGSLIALGSYNSFHNNVYRDSIIVCCINSCTSMFAGFVIFSIVGFMAHVTKRSIADVAASGPGLAFLAYPEAVTQLPISPLWAILFFSMLLMLGIDSQFCTVEGFITALVDEYPRLLRNRRELFIAAVCIISYLIGLSNITQGGIYVFKLFDYYSASGMSLLFLVFFECVSISWFYGVNRFYDNIQEMVGSRPCIWWKLCWSFFTPIIVAGVFIFSAVQMTPLTMGNYVFPKWGQGVGWLMALSSMVLIPGYMAYMFLTLKGSLKQRIQVMVQPSEDIVRPENGPEQPQAGSSTSKEAYI</sequence>
<gene>
    <name type="primary">SLC6A1</name>
    <name type="synonym">GABATR</name>
    <name type="synonym">GABT1</name>
    <name type="synonym">GAT1</name>
</gene>
<protein>
    <recommendedName>
        <fullName>Sodium- and chloride-dependent GABA transporter 1</fullName>
        <shortName>GAT-1</shortName>
    </recommendedName>
    <alternativeName>
        <fullName>Solute carrier family 6 member 1</fullName>
    </alternativeName>
</protein>
<dbReference type="EMBL" id="X54673">
    <property type="protein sequence ID" value="CAA38484.1"/>
    <property type="molecule type" value="mRNA"/>
</dbReference>
<dbReference type="EMBL" id="AC024910">
    <property type="status" value="NOT_ANNOTATED_CDS"/>
    <property type="molecule type" value="Genomic_DNA"/>
</dbReference>
<dbReference type="EMBL" id="BC033904">
    <property type="protein sequence ID" value="AAH33904.1"/>
    <property type="molecule type" value="mRNA"/>
</dbReference>
<dbReference type="CCDS" id="CCDS2603.1"/>
<dbReference type="PIR" id="S11073">
    <property type="entry name" value="S11073"/>
</dbReference>
<dbReference type="RefSeq" id="NP_001335179.1">
    <property type="nucleotide sequence ID" value="NM_001348250.2"/>
</dbReference>
<dbReference type="RefSeq" id="NP_003033.3">
    <property type="nucleotide sequence ID" value="NM_003042.3"/>
</dbReference>
<dbReference type="RefSeq" id="XP_005265467.1">
    <property type="nucleotide sequence ID" value="XM_005265410.4"/>
</dbReference>
<dbReference type="RefSeq" id="XP_005265468.1">
    <property type="nucleotide sequence ID" value="XM_005265411.6"/>
</dbReference>
<dbReference type="RefSeq" id="XP_011532327.1">
    <property type="nucleotide sequence ID" value="XM_011534025.2"/>
</dbReference>
<dbReference type="RefSeq" id="XP_011532329.1">
    <property type="nucleotide sequence ID" value="XM_011534027.4"/>
</dbReference>
<dbReference type="RefSeq" id="XP_016862560.1">
    <property type="nucleotide sequence ID" value="XM_017007071.3"/>
</dbReference>
<dbReference type="RefSeq" id="XP_016862561.1">
    <property type="nucleotide sequence ID" value="XM_017007072.3"/>
</dbReference>
<dbReference type="RefSeq" id="XP_054203587.1">
    <property type="nucleotide sequence ID" value="XM_054347612.1"/>
</dbReference>
<dbReference type="RefSeq" id="XP_054203588.1">
    <property type="nucleotide sequence ID" value="XM_054347613.1"/>
</dbReference>
<dbReference type="RefSeq" id="XP_054203589.1">
    <property type="nucleotide sequence ID" value="XM_054347614.1"/>
</dbReference>
<dbReference type="RefSeq" id="XP_054203590.1">
    <property type="nucleotide sequence ID" value="XM_054347615.1"/>
</dbReference>
<dbReference type="RefSeq" id="XP_054203591.1">
    <property type="nucleotide sequence ID" value="XM_054347616.1"/>
</dbReference>
<dbReference type="RefSeq" id="XP_054203592.1">
    <property type="nucleotide sequence ID" value="XM_054347617.1"/>
</dbReference>
<dbReference type="PDB" id="7SK2">
    <property type="method" value="EM"/>
    <property type="resolution" value="3.82 A"/>
    <property type="chains" value="A=1-578"/>
</dbReference>
<dbReference type="PDB" id="7Y7V">
    <property type="method" value="EM"/>
    <property type="resolution" value="2.20 A"/>
    <property type="chains" value="A=1-599"/>
</dbReference>
<dbReference type="PDB" id="7Y7W">
    <property type="method" value="EM"/>
    <property type="resolution" value="2.40 A"/>
    <property type="chains" value="A=1-599"/>
</dbReference>
<dbReference type="PDB" id="7Y7Y">
    <property type="method" value="EM"/>
    <property type="resolution" value="2.40 A"/>
    <property type="chains" value="A=1-599"/>
</dbReference>
<dbReference type="PDB" id="7Y7Z">
    <property type="method" value="EM"/>
    <property type="resolution" value="3.20 A"/>
    <property type="chains" value="A=1-599"/>
</dbReference>
<dbReference type="PDBsum" id="7SK2"/>
<dbReference type="PDBsum" id="7Y7V"/>
<dbReference type="PDBsum" id="7Y7W"/>
<dbReference type="PDBsum" id="7Y7Y"/>
<dbReference type="PDBsum" id="7Y7Z"/>
<dbReference type="EMDB" id="EMD-25170"/>
<dbReference type="EMDB" id="EMD-33671"/>
<dbReference type="EMDB" id="EMD-33672"/>
<dbReference type="EMDB" id="EMD-33674"/>
<dbReference type="EMDB" id="EMD-33675"/>
<dbReference type="SMR" id="P30531"/>
<dbReference type="BioGRID" id="112420">
    <property type="interactions" value="37"/>
</dbReference>
<dbReference type="CORUM" id="P30531"/>
<dbReference type="FunCoup" id="P30531">
    <property type="interactions" value="335"/>
</dbReference>
<dbReference type="IntAct" id="P30531">
    <property type="interactions" value="18"/>
</dbReference>
<dbReference type="MINT" id="P30531"/>
<dbReference type="STRING" id="9606.ENSP00000494136"/>
<dbReference type="BindingDB" id="P30531"/>
<dbReference type="ChEMBL" id="CHEMBL1903"/>
<dbReference type="DrugBank" id="DB02530">
    <property type="generic name" value="gamma-Aminobutyric acid"/>
</dbReference>
<dbReference type="DrugBank" id="DB08848">
    <property type="generic name" value="Guvacine"/>
</dbReference>
<dbReference type="DrugBank" id="DB16554">
    <property type="generic name" value="Metadoxine"/>
</dbReference>
<dbReference type="DrugBank" id="DB08849">
    <property type="generic name" value="Nipecotic acid"/>
</dbReference>
<dbReference type="DrugBank" id="DB00906">
    <property type="generic name" value="Tiagabine"/>
</dbReference>
<dbReference type="DrugCentral" id="P30531"/>
<dbReference type="GuidetoPHARMACOLOGY" id="929"/>
<dbReference type="TCDB" id="2.A.22.3.2">
    <property type="family name" value="the neurotransmitter:sodium symporter (nss) family"/>
</dbReference>
<dbReference type="GlyCosmos" id="P30531">
    <property type="glycosylation" value="3 sites, No reported glycans"/>
</dbReference>
<dbReference type="GlyGen" id="P30531">
    <property type="glycosylation" value="4 sites, 1 O-linked glycan (1 site)"/>
</dbReference>
<dbReference type="iPTMnet" id="P30531"/>
<dbReference type="PhosphoSitePlus" id="P30531"/>
<dbReference type="BioMuta" id="SLC6A1"/>
<dbReference type="DMDM" id="229462780"/>
<dbReference type="MassIVE" id="P30531"/>
<dbReference type="PaxDb" id="9606-ENSP00000287766"/>
<dbReference type="PeptideAtlas" id="P30531"/>
<dbReference type="ProteomicsDB" id="54714"/>
<dbReference type="Antibodypedia" id="1391">
    <property type="antibodies" value="269 antibodies from 33 providers"/>
</dbReference>
<dbReference type="DNASU" id="6529"/>
<dbReference type="Ensembl" id="ENST00000287766.10">
    <property type="protein sequence ID" value="ENSP00000287766.4"/>
    <property type="gene ID" value="ENSG00000157103.13"/>
</dbReference>
<dbReference type="Ensembl" id="ENST00000642201.1">
    <property type="protein sequence ID" value="ENSP00000494778.1"/>
    <property type="gene ID" value="ENSG00000157103.13"/>
</dbReference>
<dbReference type="Ensembl" id="ENST00000642515.1">
    <property type="protein sequence ID" value="ENSP00000496348.1"/>
    <property type="gene ID" value="ENSG00000157103.13"/>
</dbReference>
<dbReference type="Ensembl" id="ENST00000642639.1">
    <property type="protein sequence ID" value="ENSP00000494191.1"/>
    <property type="gene ID" value="ENSG00000157103.13"/>
</dbReference>
<dbReference type="Ensembl" id="ENST00000642735.1">
    <property type="protein sequence ID" value="ENSP00000494050.1"/>
    <property type="gene ID" value="ENSG00000157103.13"/>
</dbReference>
<dbReference type="Ensembl" id="ENST00000642767.1">
    <property type="protein sequence ID" value="ENSP00000494346.1"/>
    <property type="gene ID" value="ENSG00000157103.13"/>
</dbReference>
<dbReference type="Ensembl" id="ENST00000642820.1">
    <property type="protein sequence ID" value="ENSP00000495900.1"/>
    <property type="gene ID" value="ENSG00000157103.13"/>
</dbReference>
<dbReference type="Ensembl" id="ENST00000643396.1">
    <property type="protein sequence ID" value="ENSP00000494136.1"/>
    <property type="gene ID" value="ENSG00000157103.13"/>
</dbReference>
<dbReference type="Ensembl" id="ENST00000643498.1">
    <property type="protein sequence ID" value="ENSP00000494997.1"/>
    <property type="gene ID" value="ENSG00000157103.13"/>
</dbReference>
<dbReference type="Ensembl" id="ENST00000645029.1">
    <property type="protein sequence ID" value="ENSP00000496171.1"/>
    <property type="gene ID" value="ENSG00000157103.13"/>
</dbReference>
<dbReference type="Ensembl" id="ENST00000645054.1">
    <property type="protein sequence ID" value="ENSP00000495751.1"/>
    <property type="gene ID" value="ENSG00000157103.13"/>
</dbReference>
<dbReference type="Ensembl" id="ENST00000645592.1">
    <property type="protein sequence ID" value="ENSP00000496619.1"/>
    <property type="gene ID" value="ENSG00000157103.13"/>
</dbReference>
<dbReference type="Ensembl" id="ENST00000645974.1">
    <property type="protein sequence ID" value="ENSP00000496390.1"/>
    <property type="gene ID" value="ENSG00000157103.13"/>
</dbReference>
<dbReference type="Ensembl" id="ENST00000646022.1">
    <property type="protein sequence ID" value="ENSP00000494134.1"/>
    <property type="gene ID" value="ENSG00000157103.13"/>
</dbReference>
<dbReference type="Ensembl" id="ENST00000646060.1">
    <property type="protein sequence ID" value="ENSP00000496302.1"/>
    <property type="gene ID" value="ENSG00000157103.13"/>
</dbReference>
<dbReference type="Ensembl" id="ENST00000646570.1">
    <property type="protein sequence ID" value="ENSP00000496064.1"/>
    <property type="gene ID" value="ENSG00000157103.13"/>
</dbReference>
<dbReference type="Ensembl" id="ENST00000646702.1">
    <property type="protein sequence ID" value="ENSP00000496697.1"/>
    <property type="gene ID" value="ENSG00000157103.13"/>
</dbReference>
<dbReference type="Ensembl" id="ENST00000646924.1">
    <property type="protein sequence ID" value="ENSP00000493591.1"/>
    <property type="gene ID" value="ENSG00000157103.13"/>
</dbReference>
<dbReference type="Ensembl" id="ENST00000647194.1">
    <property type="protein sequence ID" value="ENSP00000496238.1"/>
    <property type="gene ID" value="ENSG00000157103.13"/>
</dbReference>
<dbReference type="GeneID" id="6529"/>
<dbReference type="KEGG" id="hsa:6529"/>
<dbReference type="MANE-Select" id="ENST00000287766.10">
    <property type="protein sequence ID" value="ENSP00000287766.4"/>
    <property type="RefSeq nucleotide sequence ID" value="NM_003042.4"/>
    <property type="RefSeq protein sequence ID" value="NP_003033.3"/>
</dbReference>
<dbReference type="UCSC" id="uc010hdq.4">
    <property type="organism name" value="human"/>
</dbReference>
<dbReference type="AGR" id="HGNC:11042"/>
<dbReference type="CTD" id="6529"/>
<dbReference type="DisGeNET" id="6529"/>
<dbReference type="GeneCards" id="SLC6A1"/>
<dbReference type="GeneReviews" id="SLC6A1"/>
<dbReference type="HGNC" id="HGNC:11042">
    <property type="gene designation" value="SLC6A1"/>
</dbReference>
<dbReference type="HPA" id="ENSG00000157103">
    <property type="expression patterns" value="Group enriched (brain, liver, retina)"/>
</dbReference>
<dbReference type="MalaCards" id="SLC6A1"/>
<dbReference type="MIM" id="137165">
    <property type="type" value="gene"/>
</dbReference>
<dbReference type="MIM" id="616421">
    <property type="type" value="phenotype"/>
</dbReference>
<dbReference type="neXtProt" id="NX_P30531"/>
<dbReference type="OpenTargets" id="ENSG00000157103"/>
<dbReference type="Orphanet" id="178469">
    <property type="disease" value="Autosomal dominant non-syndromic intellectual disability"/>
</dbReference>
<dbReference type="Orphanet" id="1942">
    <property type="disease" value="Epilepsy with myoclonic-atonic seizures"/>
</dbReference>
<dbReference type="PharmGKB" id="PA309"/>
<dbReference type="VEuPathDB" id="HostDB:ENSG00000157103"/>
<dbReference type="eggNOG" id="KOG3660">
    <property type="taxonomic scope" value="Eukaryota"/>
</dbReference>
<dbReference type="GeneTree" id="ENSGT00940000156027"/>
<dbReference type="HOGENOM" id="CLU_006855_9_5_1"/>
<dbReference type="InParanoid" id="P30531"/>
<dbReference type="OMA" id="MIAVFYM"/>
<dbReference type="OrthoDB" id="6581954at2759"/>
<dbReference type="PAN-GO" id="P30531">
    <property type="GO annotations" value="5 GO annotations based on evolutionary models"/>
</dbReference>
<dbReference type="PhylomeDB" id="P30531"/>
<dbReference type="TreeFam" id="TF343812"/>
<dbReference type="PathwayCommons" id="P30531"/>
<dbReference type="Reactome" id="R-HSA-442660">
    <property type="pathway name" value="Na+/Cl- dependent neurotransmitter transporters"/>
</dbReference>
<dbReference type="Reactome" id="R-HSA-888593">
    <property type="pathway name" value="Reuptake of GABA"/>
</dbReference>
<dbReference type="SABIO-RK" id="P30531"/>
<dbReference type="SignaLink" id="P30531"/>
<dbReference type="SIGNOR" id="P30531"/>
<dbReference type="BioGRID-ORCS" id="6529">
    <property type="hits" value="7 hits in 1157 CRISPR screens"/>
</dbReference>
<dbReference type="ChiTaRS" id="SLC6A1">
    <property type="organism name" value="human"/>
</dbReference>
<dbReference type="GeneWiki" id="GABA_transporter_1"/>
<dbReference type="GenomeRNAi" id="6529"/>
<dbReference type="Pharos" id="P30531">
    <property type="development level" value="Tclin"/>
</dbReference>
<dbReference type="PRO" id="PR:P30531"/>
<dbReference type="Proteomes" id="UP000005640">
    <property type="component" value="Chromosome 3"/>
</dbReference>
<dbReference type="RNAct" id="P30531">
    <property type="molecule type" value="protein"/>
</dbReference>
<dbReference type="Bgee" id="ENSG00000157103">
    <property type="expression patterns" value="Expressed in lateral nuclear group of thalamus and 140 other cell types or tissues"/>
</dbReference>
<dbReference type="ExpressionAtlas" id="P30531">
    <property type="expression patterns" value="baseline and differential"/>
</dbReference>
<dbReference type="GO" id="GO:0030424">
    <property type="term" value="C:axon"/>
    <property type="evidence" value="ECO:0000250"/>
    <property type="project" value="ARUK-UCL"/>
</dbReference>
<dbReference type="GO" id="GO:0009986">
    <property type="term" value="C:cell surface"/>
    <property type="evidence" value="ECO:0000318"/>
    <property type="project" value="GO_Central"/>
</dbReference>
<dbReference type="GO" id="GO:0098982">
    <property type="term" value="C:GABA-ergic synapse"/>
    <property type="evidence" value="ECO:0007669"/>
    <property type="project" value="Ensembl"/>
</dbReference>
<dbReference type="GO" id="GO:0016020">
    <property type="term" value="C:membrane"/>
    <property type="evidence" value="ECO:0000304"/>
    <property type="project" value="ProtInc"/>
</dbReference>
<dbReference type="GO" id="GO:0043025">
    <property type="term" value="C:neuronal cell body"/>
    <property type="evidence" value="ECO:0000250"/>
    <property type="project" value="ARUK-UCL"/>
</dbReference>
<dbReference type="GO" id="GO:0005886">
    <property type="term" value="C:plasma membrane"/>
    <property type="evidence" value="ECO:0000314"/>
    <property type="project" value="ARUK-UCL"/>
</dbReference>
<dbReference type="GO" id="GO:0098793">
    <property type="term" value="C:presynapse"/>
    <property type="evidence" value="ECO:0007669"/>
    <property type="project" value="UniProtKB-SubCell"/>
</dbReference>
<dbReference type="GO" id="GO:0015185">
    <property type="term" value="F:gamma-aminobutyric acid transmembrane transporter activity"/>
    <property type="evidence" value="ECO:0000250"/>
    <property type="project" value="ARUK-UCL"/>
</dbReference>
<dbReference type="GO" id="GO:0005332">
    <property type="term" value="F:gamma-aminobutyric acid:sodium:chloride symporter activity"/>
    <property type="evidence" value="ECO:0000314"/>
    <property type="project" value="ARUK-UCL"/>
</dbReference>
<dbReference type="GO" id="GO:0046872">
    <property type="term" value="F:metal ion binding"/>
    <property type="evidence" value="ECO:0007669"/>
    <property type="project" value="UniProtKB-KW"/>
</dbReference>
<dbReference type="GO" id="GO:0015378">
    <property type="term" value="F:sodium:chloride symporter activity"/>
    <property type="evidence" value="ECO:0000314"/>
    <property type="project" value="ARUK-UCL"/>
</dbReference>
<dbReference type="GO" id="GO:0006865">
    <property type="term" value="P:amino acid transport"/>
    <property type="evidence" value="ECO:0000318"/>
    <property type="project" value="GO_Central"/>
</dbReference>
<dbReference type="GO" id="GO:0008306">
    <property type="term" value="P:associative learning"/>
    <property type="evidence" value="ECO:0000250"/>
    <property type="project" value="ARUK-UCL"/>
</dbReference>
<dbReference type="GO" id="GO:0007268">
    <property type="term" value="P:chemical synaptic transmission"/>
    <property type="evidence" value="ECO:0000304"/>
    <property type="project" value="ProtInc"/>
</dbReference>
<dbReference type="GO" id="GO:1902476">
    <property type="term" value="P:chloride transmembrane transport"/>
    <property type="evidence" value="ECO:0000314"/>
    <property type="project" value="ARUK-UCL"/>
</dbReference>
<dbReference type="GO" id="GO:0051939">
    <property type="term" value="P:gamma-aminobutyric acid import"/>
    <property type="evidence" value="ECO:0000314"/>
    <property type="project" value="ARUK-UCL"/>
</dbReference>
<dbReference type="GO" id="GO:0051936">
    <property type="term" value="P:gamma-aminobutyric acid reuptake"/>
    <property type="evidence" value="ECO:0000304"/>
    <property type="project" value="Reactome"/>
</dbReference>
<dbReference type="GO" id="GO:0098658">
    <property type="term" value="P:inorganic anion import across plasma membrane"/>
    <property type="evidence" value="ECO:0000314"/>
    <property type="project" value="ARUK-UCL"/>
</dbReference>
<dbReference type="GO" id="GO:0007613">
    <property type="term" value="P:memory"/>
    <property type="evidence" value="ECO:0000250"/>
    <property type="project" value="ARUK-UCL"/>
</dbReference>
<dbReference type="GO" id="GO:0098719">
    <property type="term" value="P:sodium ion import across plasma membrane"/>
    <property type="evidence" value="ECO:0000314"/>
    <property type="project" value="ARUK-UCL"/>
</dbReference>
<dbReference type="GO" id="GO:0035725">
    <property type="term" value="P:sodium ion transmembrane transport"/>
    <property type="evidence" value="ECO:0000318"/>
    <property type="project" value="GO_Central"/>
</dbReference>
<dbReference type="GO" id="GO:0050808">
    <property type="term" value="P:synapse organization"/>
    <property type="evidence" value="ECO:0000250"/>
    <property type="project" value="ARUK-UCL"/>
</dbReference>
<dbReference type="GO" id="GO:0150104">
    <property type="term" value="P:transport across blood-brain barrier"/>
    <property type="evidence" value="ECO:0000303"/>
    <property type="project" value="ARUK-UCL"/>
</dbReference>
<dbReference type="CDD" id="cd11506">
    <property type="entry name" value="SLC6sbd_GAT1"/>
    <property type="match status" value="1"/>
</dbReference>
<dbReference type="InterPro" id="IPR000175">
    <property type="entry name" value="Na/ntran_symport"/>
</dbReference>
<dbReference type="InterPro" id="IPR002980">
    <property type="entry name" value="Na/ntran_symport_GABA_GAT1"/>
</dbReference>
<dbReference type="InterPro" id="IPR037272">
    <property type="entry name" value="SNS_sf"/>
</dbReference>
<dbReference type="NCBIfam" id="NF037979">
    <property type="entry name" value="Na_transp"/>
    <property type="match status" value="1"/>
</dbReference>
<dbReference type="PANTHER" id="PTHR11616:SF138">
    <property type="entry name" value="SODIUM- AND CHLORIDE-DEPENDENT GABA TRANSPORTER 1"/>
    <property type="match status" value="1"/>
</dbReference>
<dbReference type="PANTHER" id="PTHR11616">
    <property type="entry name" value="SODIUM/CHLORIDE DEPENDENT TRANSPORTER"/>
    <property type="match status" value="1"/>
</dbReference>
<dbReference type="Pfam" id="PF00209">
    <property type="entry name" value="SNF"/>
    <property type="match status" value="1"/>
</dbReference>
<dbReference type="PRINTS" id="PR01195">
    <property type="entry name" value="GAT1TRNSPORT"/>
</dbReference>
<dbReference type="PRINTS" id="PR00176">
    <property type="entry name" value="NANEUSMPORT"/>
</dbReference>
<dbReference type="SUPFAM" id="SSF161070">
    <property type="entry name" value="SNF-like"/>
    <property type="match status" value="1"/>
</dbReference>
<dbReference type="PROSITE" id="PS00610">
    <property type="entry name" value="NA_NEUROTRAN_SYMP_1"/>
    <property type="match status" value="1"/>
</dbReference>
<dbReference type="PROSITE" id="PS00754">
    <property type="entry name" value="NA_NEUROTRAN_SYMP_2"/>
    <property type="match status" value="1"/>
</dbReference>
<dbReference type="PROSITE" id="PS50267">
    <property type="entry name" value="NA_NEUROTRAN_SYMP_3"/>
    <property type="match status" value="1"/>
</dbReference>
<comment type="function">
    <text evidence="1 2 8">Mediates transport of gamma-aminobutyric acid (GABA) together with sodium and chloride and is responsible for the reuptake of GABA from the synapse (PubMed:30132828). The translocation of GABA, however, may also occur in the reverse direction leading to the release of GABA (By similarity). The direction and magnitude of GABA transport is a consequence of the prevailing thermodynamic conditions, determined by membrane potential and the intracellular and extracellular concentrations of Na(+), Cl(-) and GABA (By similarity). Can also mediate sodium- and chloride-dependent transport of hypotaurine but to a much lower extent as compared to GABA (By similarity).</text>
</comment>
<comment type="catalytic activity">
    <reaction evidence="8">
        <text>4-aminobutanoate(out) + chloride(out) + 2 Na(+)(out) = 4-aminobutanoate(in) + chloride(in) + 2 Na(+)(in)</text>
        <dbReference type="Rhea" id="RHEA:70687"/>
        <dbReference type="ChEBI" id="CHEBI:17996"/>
        <dbReference type="ChEBI" id="CHEBI:29101"/>
        <dbReference type="ChEBI" id="CHEBI:59888"/>
    </reaction>
    <physiologicalReaction direction="left-to-right" evidence="10">
        <dbReference type="Rhea" id="RHEA:70688"/>
    </physiologicalReaction>
    <physiologicalReaction direction="right-to-left" evidence="1">
        <dbReference type="Rhea" id="RHEA:70689"/>
    </physiologicalReaction>
</comment>
<comment type="catalytic activity">
    <reaction evidence="2">
        <text>hypotaurine(out) + chloride(out) + 2 Na(+)(out) = hypotaurine(in) + chloride(in) + 2 Na(+)(in)</text>
        <dbReference type="Rhea" id="RHEA:71243"/>
        <dbReference type="ChEBI" id="CHEBI:17996"/>
        <dbReference type="ChEBI" id="CHEBI:29101"/>
        <dbReference type="ChEBI" id="CHEBI:57853"/>
    </reaction>
    <physiologicalReaction direction="left-to-right" evidence="2">
        <dbReference type="Rhea" id="RHEA:71244"/>
    </physiologicalReaction>
</comment>
<comment type="subunit">
    <text evidence="2">Interacts (via PDZ domain-binding motif) with PALS1; interaction increases SLC6A1-mediated GABA uptake.</text>
</comment>
<comment type="interaction">
    <interactant intactId="EBI-9071694">
        <id>P30531</id>
    </interactant>
    <interactant intactId="EBI-7116203">
        <id>O75031</id>
        <label>HSF2BP</label>
    </interactant>
    <organismsDiffer>false</organismsDiffer>
    <experiments>3</experiments>
</comment>
<comment type="subcellular location">
    <subcellularLocation>
        <location evidence="1">Cell membrane</location>
        <topology evidence="4">Multi-pass membrane protein</topology>
    </subcellularLocation>
    <subcellularLocation>
        <location evidence="2">Presynapse</location>
    </subcellularLocation>
    <text evidence="2">Localized at the presynaptic terminals of interneurons.</text>
</comment>
<comment type="disease" evidence="7 8">
    <disease id="DI-04457">
        <name>Myoclonic-atonic epilepsy</name>
        <acronym>MAE</acronym>
        <description>A form of epilepsy characterized by myoclonic-atonic and absence seizures, appearing in early childhood. Patients have delayed development before the onset of seizures and show varying degrees of intellectual disability following seizure onset.</description>
        <dbReference type="MIM" id="616421"/>
    </disease>
    <text>The disease is caused by variants affecting the gene represented in this entry.</text>
</comment>
<comment type="miscellaneous">
    <text>This protein is the target of psychomotor stimulants such as amphetamines or cocaine.</text>
</comment>
<comment type="similarity">
    <text evidence="9">Belongs to the sodium:neurotransmitter symporter (SNF) (TC 2.A.22) family. SLC6A1 subfamily.</text>
</comment>